<evidence type="ECO:0000255" key="1">
    <source>
        <dbReference type="HAMAP-Rule" id="MF_01325"/>
    </source>
</evidence>
<evidence type="ECO:0000256" key="2">
    <source>
        <dbReference type="SAM" id="MobiDB-lite"/>
    </source>
</evidence>
<evidence type="ECO:0000305" key="3"/>
<comment type="function">
    <text evidence="1">One of the primary rRNA binding proteins, it binds directly near the 3'-end of the 23S rRNA, where it nucleates assembly of the 50S subunit.</text>
</comment>
<comment type="subunit">
    <text evidence="1">Part of the 50S ribosomal subunit. Forms a cluster with proteins L14 and L19.</text>
</comment>
<comment type="similarity">
    <text evidence="1">Belongs to the universal ribosomal protein uL3 family.</text>
</comment>
<protein>
    <recommendedName>
        <fullName evidence="1">Large ribosomal subunit protein uL3</fullName>
    </recommendedName>
    <alternativeName>
        <fullName evidence="3">50S ribosomal protein L3</fullName>
    </alternativeName>
</protein>
<proteinExistence type="inferred from homology"/>
<organism>
    <name type="scientific">Streptococcus pyogenes serotype M12 (strain MGAS9429)</name>
    <dbReference type="NCBI Taxonomy" id="370551"/>
    <lineage>
        <taxon>Bacteria</taxon>
        <taxon>Bacillati</taxon>
        <taxon>Bacillota</taxon>
        <taxon>Bacilli</taxon>
        <taxon>Lactobacillales</taxon>
        <taxon>Streptococcaceae</taxon>
        <taxon>Streptococcus</taxon>
    </lineage>
</organism>
<gene>
    <name evidence="1" type="primary">rplC</name>
    <name type="ordered locus">MGAS9429_Spy0044</name>
</gene>
<accession>Q1JP17</accession>
<name>RL3_STRPC</name>
<dbReference type="EMBL" id="CP000259">
    <property type="protein sequence ID" value="ABF31232.1"/>
    <property type="molecule type" value="Genomic_DNA"/>
</dbReference>
<dbReference type="RefSeq" id="WP_002987739.1">
    <property type="nucleotide sequence ID" value="NC_008021.1"/>
</dbReference>
<dbReference type="SMR" id="Q1JP17"/>
<dbReference type="KEGG" id="spk:MGAS9429_Spy0044"/>
<dbReference type="HOGENOM" id="CLU_044142_4_1_9"/>
<dbReference type="Proteomes" id="UP000002433">
    <property type="component" value="Chromosome"/>
</dbReference>
<dbReference type="GO" id="GO:0022625">
    <property type="term" value="C:cytosolic large ribosomal subunit"/>
    <property type="evidence" value="ECO:0007669"/>
    <property type="project" value="TreeGrafter"/>
</dbReference>
<dbReference type="GO" id="GO:0019843">
    <property type="term" value="F:rRNA binding"/>
    <property type="evidence" value="ECO:0007669"/>
    <property type="project" value="UniProtKB-UniRule"/>
</dbReference>
<dbReference type="GO" id="GO:0003735">
    <property type="term" value="F:structural constituent of ribosome"/>
    <property type="evidence" value="ECO:0007669"/>
    <property type="project" value="InterPro"/>
</dbReference>
<dbReference type="GO" id="GO:0006412">
    <property type="term" value="P:translation"/>
    <property type="evidence" value="ECO:0007669"/>
    <property type="project" value="UniProtKB-UniRule"/>
</dbReference>
<dbReference type="FunFam" id="2.40.30.10:FF:000004">
    <property type="entry name" value="50S ribosomal protein L3"/>
    <property type="match status" value="1"/>
</dbReference>
<dbReference type="FunFam" id="3.30.160.810:FF:000002">
    <property type="entry name" value="50S ribosomal protein L3"/>
    <property type="match status" value="1"/>
</dbReference>
<dbReference type="Gene3D" id="3.30.160.810">
    <property type="match status" value="1"/>
</dbReference>
<dbReference type="Gene3D" id="2.40.30.10">
    <property type="entry name" value="Translation factors"/>
    <property type="match status" value="1"/>
</dbReference>
<dbReference type="HAMAP" id="MF_01325_B">
    <property type="entry name" value="Ribosomal_uL3_B"/>
    <property type="match status" value="1"/>
</dbReference>
<dbReference type="InterPro" id="IPR000597">
    <property type="entry name" value="Ribosomal_uL3"/>
</dbReference>
<dbReference type="InterPro" id="IPR019927">
    <property type="entry name" value="Ribosomal_uL3_bac/org-type"/>
</dbReference>
<dbReference type="InterPro" id="IPR019926">
    <property type="entry name" value="Ribosomal_uL3_CS"/>
</dbReference>
<dbReference type="InterPro" id="IPR009000">
    <property type="entry name" value="Transl_B-barrel_sf"/>
</dbReference>
<dbReference type="NCBIfam" id="TIGR03625">
    <property type="entry name" value="L3_bact"/>
    <property type="match status" value="1"/>
</dbReference>
<dbReference type="PANTHER" id="PTHR11229">
    <property type="entry name" value="50S RIBOSOMAL PROTEIN L3"/>
    <property type="match status" value="1"/>
</dbReference>
<dbReference type="PANTHER" id="PTHR11229:SF16">
    <property type="entry name" value="LARGE RIBOSOMAL SUBUNIT PROTEIN UL3C"/>
    <property type="match status" value="1"/>
</dbReference>
<dbReference type="Pfam" id="PF00297">
    <property type="entry name" value="Ribosomal_L3"/>
    <property type="match status" value="1"/>
</dbReference>
<dbReference type="SUPFAM" id="SSF50447">
    <property type="entry name" value="Translation proteins"/>
    <property type="match status" value="1"/>
</dbReference>
<dbReference type="PROSITE" id="PS00474">
    <property type="entry name" value="RIBOSOMAL_L3"/>
    <property type="match status" value="1"/>
</dbReference>
<feature type="chain" id="PRO_1000052152" description="Large ribosomal subunit protein uL3">
    <location>
        <begin position="1"/>
        <end position="208"/>
    </location>
</feature>
<feature type="region of interest" description="Disordered" evidence="2">
    <location>
        <begin position="116"/>
        <end position="148"/>
    </location>
</feature>
<keyword id="KW-0687">Ribonucleoprotein</keyword>
<keyword id="KW-0689">Ribosomal protein</keyword>
<keyword id="KW-0694">RNA-binding</keyword>
<keyword id="KW-0699">rRNA-binding</keyword>
<reference key="1">
    <citation type="journal article" date="2006" name="Proc. Natl. Acad. Sci. U.S.A.">
        <title>Molecular genetic anatomy of inter- and intraserotype variation in the human bacterial pathogen group A Streptococcus.</title>
        <authorList>
            <person name="Beres S.B."/>
            <person name="Richter E.W."/>
            <person name="Nagiec M.J."/>
            <person name="Sumby P."/>
            <person name="Porcella S.F."/>
            <person name="DeLeo F.R."/>
            <person name="Musser J.M."/>
        </authorList>
    </citation>
    <scope>NUCLEOTIDE SEQUENCE [LARGE SCALE GENOMIC DNA]</scope>
    <source>
        <strain>MGAS9429</strain>
    </source>
</reference>
<sequence length="208" mass="22440">MTKGILGKKVGMTQIFTESGEFIPVTVIEATPNVVLQVKTVETDGYEAVQVGFDDKREVLSNKPAKGHVAKANTAPKRFIREFKNIEGLEVGAELSVEQFEAGDVVDVTGTSKGKGFQGVIKRHGQSRGPMAHGSRYHRRPGSMGPVAPNRVFKNKRLAGRMGGNRVTVQNLEIVQVIPEKNVILIKGNVPGAKKSLITIKSAVKAAK</sequence>